<comment type="function">
    <text evidence="1">The glycine cleavage system catalyzes the degradation of glycine. The H protein shuttles the methylamine group of glycine from the P protein to the T protein.</text>
</comment>
<comment type="function">
    <text evidence="1">Is also involved in protein lipoylation via its role as an octanoyl/lipoyl carrier protein intermediate.</text>
</comment>
<comment type="cofactor">
    <cofactor evidence="1">
        <name>(R)-lipoate</name>
        <dbReference type="ChEBI" id="CHEBI:83088"/>
    </cofactor>
    <text evidence="1">Binds 1 lipoyl cofactor covalently.</text>
</comment>
<comment type="subunit">
    <text evidence="1">The glycine cleavage system is composed of four proteins: P, T, L and H.</text>
</comment>
<comment type="similarity">
    <text evidence="1">Belongs to the GcvH family.</text>
</comment>
<gene>
    <name evidence="1" type="primary">gcvH</name>
    <name type="ordered locus">lmo2425</name>
</gene>
<accession>Q8Y4L2</accession>
<name>GCSH_LISMO</name>
<dbReference type="EMBL" id="AL591983">
    <property type="protein sequence ID" value="CAD00503.1"/>
    <property type="molecule type" value="Genomic_DNA"/>
</dbReference>
<dbReference type="PIR" id="AI1377">
    <property type="entry name" value="AI1377"/>
</dbReference>
<dbReference type="RefSeq" id="NP_465948.1">
    <property type="nucleotide sequence ID" value="NC_003210.1"/>
</dbReference>
<dbReference type="RefSeq" id="WP_003723327.1">
    <property type="nucleotide sequence ID" value="NZ_CP149495.1"/>
</dbReference>
<dbReference type="SMR" id="Q8Y4L2"/>
<dbReference type="STRING" id="169963.gene:17595135"/>
<dbReference type="PaxDb" id="169963-lmo2425"/>
<dbReference type="EnsemblBacteria" id="CAD00503">
    <property type="protein sequence ID" value="CAD00503"/>
    <property type="gene ID" value="CAD00503"/>
</dbReference>
<dbReference type="GeneID" id="987446"/>
<dbReference type="KEGG" id="lmo:lmo2425"/>
<dbReference type="PATRIC" id="fig|169963.11.peg.2483"/>
<dbReference type="eggNOG" id="COG0509">
    <property type="taxonomic scope" value="Bacteria"/>
</dbReference>
<dbReference type="HOGENOM" id="CLU_097408_2_0_9"/>
<dbReference type="OrthoDB" id="9796712at2"/>
<dbReference type="PhylomeDB" id="Q8Y4L2"/>
<dbReference type="BioCyc" id="LMON169963:LMO2425-MONOMER"/>
<dbReference type="Proteomes" id="UP000000817">
    <property type="component" value="Chromosome"/>
</dbReference>
<dbReference type="GO" id="GO:0005829">
    <property type="term" value="C:cytosol"/>
    <property type="evidence" value="ECO:0000318"/>
    <property type="project" value="GO_Central"/>
</dbReference>
<dbReference type="GO" id="GO:0005960">
    <property type="term" value="C:glycine cleavage complex"/>
    <property type="evidence" value="ECO:0007669"/>
    <property type="project" value="InterPro"/>
</dbReference>
<dbReference type="GO" id="GO:0019464">
    <property type="term" value="P:glycine decarboxylation via glycine cleavage system"/>
    <property type="evidence" value="ECO:0007669"/>
    <property type="project" value="UniProtKB-UniRule"/>
</dbReference>
<dbReference type="CDD" id="cd06848">
    <property type="entry name" value="GCS_H"/>
    <property type="match status" value="1"/>
</dbReference>
<dbReference type="Gene3D" id="2.40.50.100">
    <property type="match status" value="1"/>
</dbReference>
<dbReference type="HAMAP" id="MF_00272">
    <property type="entry name" value="GcvH"/>
    <property type="match status" value="1"/>
</dbReference>
<dbReference type="InterPro" id="IPR003016">
    <property type="entry name" value="2-oxoA_DH_lipoyl-BS"/>
</dbReference>
<dbReference type="InterPro" id="IPR000089">
    <property type="entry name" value="Biotin_lipoyl"/>
</dbReference>
<dbReference type="InterPro" id="IPR002930">
    <property type="entry name" value="GCV_H"/>
</dbReference>
<dbReference type="InterPro" id="IPR033753">
    <property type="entry name" value="GCV_H/Fam206"/>
</dbReference>
<dbReference type="InterPro" id="IPR017453">
    <property type="entry name" value="GCV_H_sub"/>
</dbReference>
<dbReference type="InterPro" id="IPR011053">
    <property type="entry name" value="Single_hybrid_motif"/>
</dbReference>
<dbReference type="NCBIfam" id="TIGR00527">
    <property type="entry name" value="gcvH"/>
    <property type="match status" value="1"/>
</dbReference>
<dbReference type="NCBIfam" id="NF002270">
    <property type="entry name" value="PRK01202.1"/>
    <property type="match status" value="1"/>
</dbReference>
<dbReference type="PANTHER" id="PTHR11715">
    <property type="entry name" value="GLYCINE CLEAVAGE SYSTEM H PROTEIN"/>
    <property type="match status" value="1"/>
</dbReference>
<dbReference type="PANTHER" id="PTHR11715:SF3">
    <property type="entry name" value="GLYCINE CLEAVAGE SYSTEM H PROTEIN-RELATED"/>
    <property type="match status" value="1"/>
</dbReference>
<dbReference type="Pfam" id="PF01597">
    <property type="entry name" value="GCV_H"/>
    <property type="match status" value="1"/>
</dbReference>
<dbReference type="SUPFAM" id="SSF51230">
    <property type="entry name" value="Single hybrid motif"/>
    <property type="match status" value="1"/>
</dbReference>
<dbReference type="PROSITE" id="PS50968">
    <property type="entry name" value="BIOTINYL_LIPOYL"/>
    <property type="match status" value="1"/>
</dbReference>
<dbReference type="PROSITE" id="PS00189">
    <property type="entry name" value="LIPOYL"/>
    <property type="match status" value="1"/>
</dbReference>
<sequence length="125" mass="13801">MSLPKDLLYTEEHEWVKADDGSYVIGITDFAQDQLGDIVFVELPEVGDTVTKGDSIGSIESVKTVSDFYAPVTGKVVAVNETLEDEPELINSNPYDTGWILKLEEVEEADVKALLSSDDYEKVLD</sequence>
<evidence type="ECO:0000255" key="1">
    <source>
        <dbReference type="HAMAP-Rule" id="MF_00272"/>
    </source>
</evidence>
<evidence type="ECO:0000255" key="2">
    <source>
        <dbReference type="PROSITE-ProRule" id="PRU01066"/>
    </source>
</evidence>
<feature type="chain" id="PRO_0000166225" description="Glycine cleavage system H protein">
    <location>
        <begin position="1"/>
        <end position="125"/>
    </location>
</feature>
<feature type="domain" description="Lipoyl-binding" evidence="2">
    <location>
        <begin position="22"/>
        <end position="104"/>
    </location>
</feature>
<feature type="modified residue" description="N6-lipoyllysine" evidence="1">
    <location>
        <position position="63"/>
    </location>
</feature>
<reference key="1">
    <citation type="journal article" date="2001" name="Science">
        <title>Comparative genomics of Listeria species.</title>
        <authorList>
            <person name="Glaser P."/>
            <person name="Frangeul L."/>
            <person name="Buchrieser C."/>
            <person name="Rusniok C."/>
            <person name="Amend A."/>
            <person name="Baquero F."/>
            <person name="Berche P."/>
            <person name="Bloecker H."/>
            <person name="Brandt P."/>
            <person name="Chakraborty T."/>
            <person name="Charbit A."/>
            <person name="Chetouani F."/>
            <person name="Couve E."/>
            <person name="de Daruvar A."/>
            <person name="Dehoux P."/>
            <person name="Domann E."/>
            <person name="Dominguez-Bernal G."/>
            <person name="Duchaud E."/>
            <person name="Durant L."/>
            <person name="Dussurget O."/>
            <person name="Entian K.-D."/>
            <person name="Fsihi H."/>
            <person name="Garcia-del Portillo F."/>
            <person name="Garrido P."/>
            <person name="Gautier L."/>
            <person name="Goebel W."/>
            <person name="Gomez-Lopez N."/>
            <person name="Hain T."/>
            <person name="Hauf J."/>
            <person name="Jackson D."/>
            <person name="Jones L.-M."/>
            <person name="Kaerst U."/>
            <person name="Kreft J."/>
            <person name="Kuhn M."/>
            <person name="Kunst F."/>
            <person name="Kurapkat G."/>
            <person name="Madueno E."/>
            <person name="Maitournam A."/>
            <person name="Mata Vicente J."/>
            <person name="Ng E."/>
            <person name="Nedjari H."/>
            <person name="Nordsiek G."/>
            <person name="Novella S."/>
            <person name="de Pablos B."/>
            <person name="Perez-Diaz J.-C."/>
            <person name="Purcell R."/>
            <person name="Remmel B."/>
            <person name="Rose M."/>
            <person name="Schlueter T."/>
            <person name="Simoes N."/>
            <person name="Tierrez A."/>
            <person name="Vazquez-Boland J.-A."/>
            <person name="Voss H."/>
            <person name="Wehland J."/>
            <person name="Cossart P."/>
        </authorList>
    </citation>
    <scope>NUCLEOTIDE SEQUENCE [LARGE SCALE GENOMIC DNA]</scope>
    <source>
        <strain>ATCC BAA-679 / EGD-e</strain>
    </source>
</reference>
<organism>
    <name type="scientific">Listeria monocytogenes serovar 1/2a (strain ATCC BAA-679 / EGD-e)</name>
    <dbReference type="NCBI Taxonomy" id="169963"/>
    <lineage>
        <taxon>Bacteria</taxon>
        <taxon>Bacillati</taxon>
        <taxon>Bacillota</taxon>
        <taxon>Bacilli</taxon>
        <taxon>Bacillales</taxon>
        <taxon>Listeriaceae</taxon>
        <taxon>Listeria</taxon>
    </lineage>
</organism>
<protein>
    <recommendedName>
        <fullName evidence="1">Glycine cleavage system H protein</fullName>
    </recommendedName>
    <alternativeName>
        <fullName evidence="1">Octanoyl/lipoyl carrier protein</fullName>
    </alternativeName>
</protein>
<keyword id="KW-0450">Lipoyl</keyword>
<keyword id="KW-1185">Reference proteome</keyword>
<proteinExistence type="inferred from homology"/>